<sequence length="318" mass="34400">MTCKIIGCGGYLPSKIVSNDELAKFVDTNDEWIRTRTGITQRHIAGDTEYTSHLALKSAEKAIADAGISVNDIDLIITCTTTPDNSFPSVASKLQGYLGLTNIPSFDLQAVCAGFVYGLQVANSLISSDKYKTILLIGAEKMTSLLDWNDRTTCVLFGDGAGSVILQRSSDDSGLIDSNIFSSGADYDEILYTNGGVSMNGISGKIVMQGQKLFRHAIEKMQQSIKDLLHANQFSVSDIDYFIPHQANIRIINKLAELLNIEEHKVVKTVDKHANCSAASIPLALSTLKASGKIKKGDILLFSAIGAGLTWGSAFIRW</sequence>
<proteinExistence type="inferred from homology"/>
<evidence type="ECO:0000255" key="1">
    <source>
        <dbReference type="HAMAP-Rule" id="MF_01815"/>
    </source>
</evidence>
<comment type="function">
    <text evidence="1">Catalyzes the condensation reaction of fatty acid synthesis by the addition to an acyl acceptor of two carbons from malonyl-ACP. Catalyzes the first condensation reaction which initiates fatty acid synthesis and may therefore play a role in governing the total rate of fatty acid production. Possesses both acetoacetyl-ACP synthase and acetyl transacylase activities. Its substrate specificity determines the biosynthesis of branched-chain and/or straight-chain of fatty acids.</text>
</comment>
<comment type="catalytic activity">
    <reaction evidence="1">
        <text>malonyl-[ACP] + acetyl-CoA + H(+) = 3-oxobutanoyl-[ACP] + CO2 + CoA</text>
        <dbReference type="Rhea" id="RHEA:12080"/>
        <dbReference type="Rhea" id="RHEA-COMP:9623"/>
        <dbReference type="Rhea" id="RHEA-COMP:9625"/>
        <dbReference type="ChEBI" id="CHEBI:15378"/>
        <dbReference type="ChEBI" id="CHEBI:16526"/>
        <dbReference type="ChEBI" id="CHEBI:57287"/>
        <dbReference type="ChEBI" id="CHEBI:57288"/>
        <dbReference type="ChEBI" id="CHEBI:78449"/>
        <dbReference type="ChEBI" id="CHEBI:78450"/>
        <dbReference type="EC" id="2.3.1.180"/>
    </reaction>
</comment>
<comment type="pathway">
    <text evidence="1">Lipid metabolism; fatty acid biosynthesis.</text>
</comment>
<comment type="subunit">
    <text evidence="1">Homodimer.</text>
</comment>
<comment type="subcellular location">
    <subcellularLocation>
        <location evidence="1">Cytoplasm</location>
    </subcellularLocation>
</comment>
<comment type="domain">
    <text evidence="1">The last Arg residue of the ACP-binding site is essential for the weak association between ACP/AcpP and FabH.</text>
</comment>
<comment type="similarity">
    <text evidence="1">Belongs to the thiolase-like superfamily. FabH family.</text>
</comment>
<dbReference type="EC" id="2.3.1.180" evidence="1"/>
<dbReference type="EMBL" id="CP000766">
    <property type="protein sequence ID" value="ABY73140.1"/>
    <property type="molecule type" value="Genomic_DNA"/>
</dbReference>
<dbReference type="RefSeq" id="WP_010977768.1">
    <property type="nucleotide sequence ID" value="NC_010263.3"/>
</dbReference>
<dbReference type="SMR" id="B0BV80"/>
<dbReference type="KEGG" id="rrj:RrIowa_1407"/>
<dbReference type="eggNOG" id="COG0332">
    <property type="taxonomic scope" value="Bacteria"/>
</dbReference>
<dbReference type="HOGENOM" id="CLU_039592_3_1_5"/>
<dbReference type="UniPathway" id="UPA00094"/>
<dbReference type="Proteomes" id="UP000000796">
    <property type="component" value="Chromosome"/>
</dbReference>
<dbReference type="GO" id="GO:0005737">
    <property type="term" value="C:cytoplasm"/>
    <property type="evidence" value="ECO:0007669"/>
    <property type="project" value="UniProtKB-SubCell"/>
</dbReference>
<dbReference type="GO" id="GO:0004315">
    <property type="term" value="F:3-oxoacyl-[acyl-carrier-protein] synthase activity"/>
    <property type="evidence" value="ECO:0007669"/>
    <property type="project" value="InterPro"/>
</dbReference>
<dbReference type="GO" id="GO:0033818">
    <property type="term" value="F:beta-ketoacyl-acyl-carrier-protein synthase III activity"/>
    <property type="evidence" value="ECO:0007669"/>
    <property type="project" value="UniProtKB-UniRule"/>
</dbReference>
<dbReference type="GO" id="GO:0006633">
    <property type="term" value="P:fatty acid biosynthetic process"/>
    <property type="evidence" value="ECO:0007669"/>
    <property type="project" value="UniProtKB-UniRule"/>
</dbReference>
<dbReference type="GO" id="GO:0044550">
    <property type="term" value="P:secondary metabolite biosynthetic process"/>
    <property type="evidence" value="ECO:0007669"/>
    <property type="project" value="TreeGrafter"/>
</dbReference>
<dbReference type="CDD" id="cd00830">
    <property type="entry name" value="KAS_III"/>
    <property type="match status" value="1"/>
</dbReference>
<dbReference type="FunFam" id="3.40.47.10:FF:000004">
    <property type="entry name" value="3-oxoacyl-[acyl-carrier-protein] synthase 3"/>
    <property type="match status" value="1"/>
</dbReference>
<dbReference type="Gene3D" id="3.40.47.10">
    <property type="match status" value="1"/>
</dbReference>
<dbReference type="HAMAP" id="MF_01815">
    <property type="entry name" value="FabH"/>
    <property type="match status" value="1"/>
</dbReference>
<dbReference type="InterPro" id="IPR013747">
    <property type="entry name" value="ACP_syn_III_C"/>
</dbReference>
<dbReference type="InterPro" id="IPR013751">
    <property type="entry name" value="ACP_syn_III_N"/>
</dbReference>
<dbReference type="InterPro" id="IPR004655">
    <property type="entry name" value="FabH"/>
</dbReference>
<dbReference type="InterPro" id="IPR016039">
    <property type="entry name" value="Thiolase-like"/>
</dbReference>
<dbReference type="NCBIfam" id="TIGR00747">
    <property type="entry name" value="fabH"/>
    <property type="match status" value="1"/>
</dbReference>
<dbReference type="NCBIfam" id="NF006829">
    <property type="entry name" value="PRK09352.1"/>
    <property type="match status" value="1"/>
</dbReference>
<dbReference type="PANTHER" id="PTHR34069">
    <property type="entry name" value="3-OXOACYL-[ACYL-CARRIER-PROTEIN] SYNTHASE 3"/>
    <property type="match status" value="1"/>
</dbReference>
<dbReference type="PANTHER" id="PTHR34069:SF2">
    <property type="entry name" value="BETA-KETOACYL-[ACYL-CARRIER-PROTEIN] SYNTHASE III"/>
    <property type="match status" value="1"/>
</dbReference>
<dbReference type="Pfam" id="PF08545">
    <property type="entry name" value="ACP_syn_III"/>
    <property type="match status" value="1"/>
</dbReference>
<dbReference type="Pfam" id="PF08541">
    <property type="entry name" value="ACP_syn_III_C"/>
    <property type="match status" value="1"/>
</dbReference>
<dbReference type="SUPFAM" id="SSF53901">
    <property type="entry name" value="Thiolase-like"/>
    <property type="match status" value="1"/>
</dbReference>
<gene>
    <name evidence="1" type="primary">fabH</name>
    <name type="ordered locus">RrIowa_1407</name>
</gene>
<accession>B0BV80</accession>
<reference key="1">
    <citation type="journal article" date="2008" name="Infect. Immun.">
        <title>Genomic comparison of virulent Rickettsia rickettsii Sheila Smith and avirulent Rickettsia rickettsii Iowa.</title>
        <authorList>
            <person name="Ellison D.W."/>
            <person name="Clark T.R."/>
            <person name="Sturdevant D.E."/>
            <person name="Virtaneva K."/>
            <person name="Porcella S.F."/>
            <person name="Hackstadt T."/>
        </authorList>
    </citation>
    <scope>NUCLEOTIDE SEQUENCE [LARGE SCALE GENOMIC DNA]</scope>
    <source>
        <strain>Iowa</strain>
    </source>
</reference>
<keyword id="KW-0012">Acyltransferase</keyword>
<keyword id="KW-0963">Cytoplasm</keyword>
<keyword id="KW-0275">Fatty acid biosynthesis</keyword>
<keyword id="KW-0276">Fatty acid metabolism</keyword>
<keyword id="KW-0444">Lipid biosynthesis</keyword>
<keyword id="KW-0443">Lipid metabolism</keyword>
<keyword id="KW-0511">Multifunctional enzyme</keyword>
<keyword id="KW-0808">Transferase</keyword>
<organism>
    <name type="scientific">Rickettsia rickettsii (strain Iowa)</name>
    <dbReference type="NCBI Taxonomy" id="452659"/>
    <lineage>
        <taxon>Bacteria</taxon>
        <taxon>Pseudomonadati</taxon>
        <taxon>Pseudomonadota</taxon>
        <taxon>Alphaproteobacteria</taxon>
        <taxon>Rickettsiales</taxon>
        <taxon>Rickettsiaceae</taxon>
        <taxon>Rickettsieae</taxon>
        <taxon>Rickettsia</taxon>
        <taxon>spotted fever group</taxon>
    </lineage>
</organism>
<feature type="chain" id="PRO_1000088319" description="Beta-ketoacyl-[acyl-carrier-protein] synthase III">
    <location>
        <begin position="1"/>
        <end position="318"/>
    </location>
</feature>
<feature type="region of interest" description="ACP-binding" evidence="1">
    <location>
        <begin position="246"/>
        <end position="250"/>
    </location>
</feature>
<feature type="active site" evidence="1">
    <location>
        <position position="112"/>
    </location>
</feature>
<feature type="active site" evidence="1">
    <location>
        <position position="245"/>
    </location>
</feature>
<feature type="active site" evidence="1">
    <location>
        <position position="275"/>
    </location>
</feature>
<protein>
    <recommendedName>
        <fullName evidence="1">Beta-ketoacyl-[acyl-carrier-protein] synthase III</fullName>
        <shortName evidence="1">Beta-ketoacyl-ACP synthase III</shortName>
        <shortName evidence="1">KAS III</shortName>
        <ecNumber evidence="1">2.3.1.180</ecNumber>
    </recommendedName>
    <alternativeName>
        <fullName evidence="1">3-oxoacyl-[acyl-carrier-protein] synthase 3</fullName>
    </alternativeName>
    <alternativeName>
        <fullName evidence="1">3-oxoacyl-[acyl-carrier-protein] synthase III</fullName>
    </alternativeName>
</protein>
<name>FABH_RICRO</name>